<accession>Q3MJ40</accession>
<accession>Q6P5Q3</accession>
<accession>Q8N200</accession>
<proteinExistence type="uncertain"/>
<keyword id="KW-0025">Alternative splicing</keyword>
<keyword id="KW-0175">Coiled coil</keyword>
<keyword id="KW-1185">Reference proteome</keyword>
<organism>
    <name type="scientific">Homo sapiens</name>
    <name type="common">Human</name>
    <dbReference type="NCBI Taxonomy" id="9606"/>
    <lineage>
        <taxon>Eukaryota</taxon>
        <taxon>Metazoa</taxon>
        <taxon>Chordata</taxon>
        <taxon>Craniata</taxon>
        <taxon>Vertebrata</taxon>
        <taxon>Euteleostomi</taxon>
        <taxon>Mammalia</taxon>
        <taxon>Eutheria</taxon>
        <taxon>Euarchontoglires</taxon>
        <taxon>Primates</taxon>
        <taxon>Haplorrhini</taxon>
        <taxon>Catarrhini</taxon>
        <taxon>Hominidae</taxon>
        <taxon>Homo</taxon>
    </lineage>
</organism>
<dbReference type="EMBL" id="AK093811">
    <property type="status" value="NOT_ANNOTATED_CDS"/>
    <property type="molecule type" value="mRNA"/>
</dbReference>
<dbReference type="EMBL" id="EF553518">
    <property type="protein sequence ID" value="ABQ66264.1"/>
    <property type="molecule type" value="mRNA"/>
</dbReference>
<dbReference type="EMBL" id="AC026271">
    <property type="status" value="NOT_ANNOTATED_CDS"/>
    <property type="molecule type" value="Genomic_DNA"/>
</dbReference>
<dbReference type="EMBL" id="AC107983">
    <property type="status" value="NOT_ANNOTATED_CDS"/>
    <property type="molecule type" value="Genomic_DNA"/>
</dbReference>
<dbReference type="EMBL" id="BC062767">
    <property type="protein sequence ID" value="AAH62767.1"/>
    <property type="status" value="ALT_SEQ"/>
    <property type="molecule type" value="mRNA"/>
</dbReference>
<dbReference type="EMBL" id="BC101585">
    <property type="protein sequence ID" value="AAI01586.1"/>
    <property type="molecule type" value="mRNA"/>
</dbReference>
<dbReference type="EMBL" id="BC104815">
    <property type="protein sequence ID" value="AAI04816.1"/>
    <property type="molecule type" value="mRNA"/>
</dbReference>
<dbReference type="SMR" id="Q3MJ40"/>
<dbReference type="DIP" id="DIP-47329N"/>
<dbReference type="IntAct" id="Q3MJ40">
    <property type="interactions" value="11"/>
</dbReference>
<dbReference type="MINT" id="Q3MJ40"/>
<dbReference type="GlyGen" id="Q3MJ40">
    <property type="glycosylation" value="1 site, 1 O-linked glycan (1 site)"/>
</dbReference>
<dbReference type="iPTMnet" id="Q3MJ40"/>
<dbReference type="PhosphoSitePlus" id="Q3MJ40"/>
<dbReference type="BioMuta" id="HGNC:26704"/>
<dbReference type="DMDM" id="121942840"/>
<dbReference type="jPOST" id="Q3MJ40"/>
<dbReference type="MassIVE" id="Q3MJ40"/>
<dbReference type="PeptideAtlas" id="Q3MJ40"/>
<dbReference type="Pumba" id="Q3MJ40"/>
<dbReference type="AGR" id="HGNC:26704"/>
<dbReference type="GeneCards" id="CCDC144BP"/>
<dbReference type="HGNC" id="HGNC:26704">
    <property type="gene designation" value="CCDC144BP"/>
</dbReference>
<dbReference type="neXtProt" id="NX_Q3MJ40"/>
<dbReference type="PharmGKB" id="PA162381474"/>
<dbReference type="InParanoid" id="Q3MJ40"/>
<dbReference type="PAN-GO" id="Q3MJ40">
    <property type="GO annotations" value="0 GO annotations based on evolutionary models"/>
</dbReference>
<dbReference type="PhylomeDB" id="Q3MJ40"/>
<dbReference type="PathwayCommons" id="Q3MJ40"/>
<dbReference type="ChiTaRS" id="CCDC144B">
    <property type="organism name" value="human"/>
</dbReference>
<dbReference type="Pharos" id="Q3MJ40">
    <property type="development level" value="Tdark"/>
</dbReference>
<dbReference type="PRO" id="PR:Q3MJ40"/>
<dbReference type="Proteomes" id="UP000005640">
    <property type="component" value="Unplaced"/>
</dbReference>
<dbReference type="RNAct" id="Q3MJ40">
    <property type="molecule type" value="protein"/>
</dbReference>
<dbReference type="InterPro" id="IPR040118">
    <property type="entry name" value="C144A/B/C"/>
</dbReference>
<dbReference type="PANTHER" id="PTHR22245">
    <property type="entry name" value="COILED-COIL DOMAIN-CONTAINING PROTEIN 144A-RELATED"/>
    <property type="match status" value="1"/>
</dbReference>
<dbReference type="PANTHER" id="PTHR22245:SF3">
    <property type="entry name" value="COILED-COIL DOMAIN-CONTAINING PROTEIN 144A-RELATED"/>
    <property type="match status" value="1"/>
</dbReference>
<evidence type="ECO:0000255" key="1"/>
<evidence type="ECO:0000256" key="2">
    <source>
        <dbReference type="SAM" id="MobiDB-lite"/>
    </source>
</evidence>
<evidence type="ECO:0000303" key="3">
    <source>
    </source>
</evidence>
<evidence type="ECO:0000305" key="4"/>
<evidence type="ECO:0000312" key="5">
    <source>
        <dbReference type="HGNC" id="HGNC:26704"/>
    </source>
</evidence>
<gene>
    <name evidence="5" type="primary">CCDC144BP</name>
    <name type="synonym">CCDC144B</name>
</gene>
<feature type="chain" id="PRO_0000312280" description="Putative coiled-coil domain-containing protein 144B">
    <location>
        <begin position="1"/>
        <end position="725"/>
    </location>
</feature>
<feature type="region of interest" description="Disordered" evidence="2">
    <location>
        <begin position="1"/>
        <end position="25"/>
    </location>
</feature>
<feature type="region of interest" description="Disordered" evidence="2">
    <location>
        <begin position="87"/>
        <end position="188"/>
    </location>
</feature>
<feature type="region of interest" description="Disordered" evidence="2">
    <location>
        <begin position="213"/>
        <end position="260"/>
    </location>
</feature>
<feature type="region of interest" description="Disordered" evidence="2">
    <location>
        <begin position="453"/>
        <end position="485"/>
    </location>
</feature>
<feature type="region of interest" description="Disordered" evidence="2">
    <location>
        <begin position="528"/>
        <end position="586"/>
    </location>
</feature>
<feature type="coiled-coil region" evidence="1">
    <location>
        <begin position="215"/>
        <end position="244"/>
    </location>
</feature>
<feature type="coiled-coil region" evidence="1">
    <location>
        <begin position="490"/>
        <end position="546"/>
    </location>
</feature>
<feature type="coiled-coil region" evidence="1">
    <location>
        <begin position="648"/>
        <end position="713"/>
    </location>
</feature>
<feature type="compositionally biased region" description="Basic and acidic residues" evidence="2">
    <location>
        <begin position="1"/>
        <end position="11"/>
    </location>
</feature>
<feature type="compositionally biased region" description="Polar residues" evidence="2">
    <location>
        <begin position="129"/>
        <end position="150"/>
    </location>
</feature>
<feature type="compositionally biased region" description="Polar residues" evidence="2">
    <location>
        <begin position="165"/>
        <end position="178"/>
    </location>
</feature>
<feature type="compositionally biased region" description="Acidic residues" evidence="2">
    <location>
        <begin position="224"/>
        <end position="234"/>
    </location>
</feature>
<feature type="compositionally biased region" description="Polar residues" evidence="2">
    <location>
        <begin position="453"/>
        <end position="467"/>
    </location>
</feature>
<feature type="compositionally biased region" description="Basic and acidic residues" evidence="2">
    <location>
        <begin position="528"/>
        <end position="537"/>
    </location>
</feature>
<feature type="compositionally biased region" description="Low complexity" evidence="2">
    <location>
        <begin position="543"/>
        <end position="552"/>
    </location>
</feature>
<feature type="compositionally biased region" description="Basic and acidic residues" evidence="2">
    <location>
        <begin position="563"/>
        <end position="583"/>
    </location>
</feature>
<feature type="splice variant" id="VSP_029792" description="In isoform 2." evidence="3">
    <location>
        <position position="222"/>
    </location>
</feature>
<feature type="splice variant" id="VSP_029793" description="In isoform 2." evidence="3">
    <location>
        <begin position="573"/>
        <end position="725"/>
    </location>
</feature>
<feature type="sequence conflict" description="In Ref. 1; AK093811." evidence="4" ref="1">
    <original>K</original>
    <variation>N</variation>
    <location>
        <position position="370"/>
    </location>
</feature>
<sequence length="725" mass="82951">MASWGGEKRGGAEGSPKLAVYATRKTRSVRSQEDQWYLGYPGDQWSSGFSYSWWKNSVGSESKHGEGALDQPQHDVRLEDLGELHRAARSGDVPGVEHVLAPGDTGVDKRDRKKSIQQLVPEYKEKQTPESLPQNNNPDWHPTNLTLSDETCQRSKNLKVGDKSPSVSPSMPENQSATKELGQMNLTEREKMDTGVVLLSGNDTLHDLCQSQLPENKESKEAEQDLELTSEEEQERLKGCENKQPQKTSQEPEMAKDCDREDIPIYPVLPHVQKSEEMWIEQGKLEWKNQLKLVINELKQRFGEIYEKYKIPACPEEEPLLDNSTRGTDVKDIPFNLTNNIPGCEEEDASEISVSVVFETFPEQKEPSLKNIIHPYYHPYSGSQEHVCQSSSKLHLHENKLDCDNDNKLGIGHIFSTDNNFHNDASTKKARNPEVVTVEMKEDQEFDLQMTKNMNQNSDSGSTNNYKSLKPKLENLSSLPPDSDRTSEVYLHEELQQDMQKFKNEVNTLEEEFLALKKENVQLHKEVEEEMEKHRSNSTELSGTLTDGTTVGNDDDGLNQQIPRKENEEHDRPADKTANEKNKVKNQIYPEADFADSMEPSEIASEDCELSHSVYENFMLLIEQLRMEYKDSASLPRIQDTFCLCEHLLKLKNNHCDQLTVKLKQMENMVSVLQNELSETKKTKLQLELQKIEWEKELYDLRLALKQENGRKEMPICCIIKIVNS</sequence>
<protein>
    <recommendedName>
        <fullName>Putative coiled-coil domain-containing protein 144B</fullName>
    </recommendedName>
    <alternativeName>
        <fullName evidence="5">Coiled-coil domain-containing protein 144B, pseudogene</fullName>
    </alternativeName>
</protein>
<reference key="1">
    <citation type="journal article" date="2004" name="Nat. Genet.">
        <title>Complete sequencing and characterization of 21,243 full-length human cDNAs.</title>
        <authorList>
            <person name="Ota T."/>
            <person name="Suzuki Y."/>
            <person name="Nishikawa T."/>
            <person name="Otsuki T."/>
            <person name="Sugiyama T."/>
            <person name="Irie R."/>
            <person name="Wakamatsu A."/>
            <person name="Hayashi K."/>
            <person name="Sato H."/>
            <person name="Nagai K."/>
            <person name="Kimura K."/>
            <person name="Makita H."/>
            <person name="Sekine M."/>
            <person name="Obayashi M."/>
            <person name="Nishi T."/>
            <person name="Shibahara T."/>
            <person name="Tanaka T."/>
            <person name="Ishii S."/>
            <person name="Yamamoto J."/>
            <person name="Saito K."/>
            <person name="Kawai Y."/>
            <person name="Isono Y."/>
            <person name="Nakamura Y."/>
            <person name="Nagahari K."/>
            <person name="Murakami K."/>
            <person name="Yasuda T."/>
            <person name="Iwayanagi T."/>
            <person name="Wagatsuma M."/>
            <person name="Shiratori A."/>
            <person name="Sudo H."/>
            <person name="Hosoiri T."/>
            <person name="Kaku Y."/>
            <person name="Kodaira H."/>
            <person name="Kondo H."/>
            <person name="Sugawara M."/>
            <person name="Takahashi M."/>
            <person name="Kanda K."/>
            <person name="Yokoi T."/>
            <person name="Furuya T."/>
            <person name="Kikkawa E."/>
            <person name="Omura Y."/>
            <person name="Abe K."/>
            <person name="Kamihara K."/>
            <person name="Katsuta N."/>
            <person name="Sato K."/>
            <person name="Tanikawa M."/>
            <person name="Yamazaki M."/>
            <person name="Ninomiya K."/>
            <person name="Ishibashi T."/>
            <person name="Yamashita H."/>
            <person name="Murakawa K."/>
            <person name="Fujimori K."/>
            <person name="Tanai H."/>
            <person name="Kimata M."/>
            <person name="Watanabe M."/>
            <person name="Hiraoka S."/>
            <person name="Chiba Y."/>
            <person name="Ishida S."/>
            <person name="Ono Y."/>
            <person name="Takiguchi S."/>
            <person name="Watanabe S."/>
            <person name="Yosida M."/>
            <person name="Hotuta T."/>
            <person name="Kusano J."/>
            <person name="Kanehori K."/>
            <person name="Takahashi-Fujii A."/>
            <person name="Hara H."/>
            <person name="Tanase T.-O."/>
            <person name="Nomura Y."/>
            <person name="Togiya S."/>
            <person name="Komai F."/>
            <person name="Hara R."/>
            <person name="Takeuchi K."/>
            <person name="Arita M."/>
            <person name="Imose N."/>
            <person name="Musashino K."/>
            <person name="Yuuki H."/>
            <person name="Oshima A."/>
            <person name="Sasaki N."/>
            <person name="Aotsuka S."/>
            <person name="Yoshikawa Y."/>
            <person name="Matsunawa H."/>
            <person name="Ichihara T."/>
            <person name="Shiohata N."/>
            <person name="Sano S."/>
            <person name="Moriya S."/>
            <person name="Momiyama H."/>
            <person name="Satoh N."/>
            <person name="Takami S."/>
            <person name="Terashima Y."/>
            <person name="Suzuki O."/>
            <person name="Nakagawa S."/>
            <person name="Senoh A."/>
            <person name="Mizoguchi H."/>
            <person name="Goto Y."/>
            <person name="Shimizu F."/>
            <person name="Wakebe H."/>
            <person name="Hishigaki H."/>
            <person name="Watanabe T."/>
            <person name="Sugiyama A."/>
            <person name="Takemoto M."/>
            <person name="Kawakami B."/>
            <person name="Yamazaki M."/>
            <person name="Watanabe K."/>
            <person name="Kumagai A."/>
            <person name="Itakura S."/>
            <person name="Fukuzumi Y."/>
            <person name="Fujimori Y."/>
            <person name="Komiyama M."/>
            <person name="Tashiro H."/>
            <person name="Tanigami A."/>
            <person name="Fujiwara T."/>
            <person name="Ono T."/>
            <person name="Yamada K."/>
            <person name="Fujii Y."/>
            <person name="Ozaki K."/>
            <person name="Hirao M."/>
            <person name="Ohmori Y."/>
            <person name="Kawabata A."/>
            <person name="Hikiji T."/>
            <person name="Kobatake N."/>
            <person name="Inagaki H."/>
            <person name="Ikema Y."/>
            <person name="Okamoto S."/>
            <person name="Okitani R."/>
            <person name="Kawakami T."/>
            <person name="Noguchi S."/>
            <person name="Itoh T."/>
            <person name="Shigeta K."/>
            <person name="Senba T."/>
            <person name="Matsumura K."/>
            <person name="Nakajima Y."/>
            <person name="Mizuno T."/>
            <person name="Morinaga M."/>
            <person name="Sasaki M."/>
            <person name="Togashi T."/>
            <person name="Oyama M."/>
            <person name="Hata H."/>
            <person name="Watanabe M."/>
            <person name="Komatsu T."/>
            <person name="Mizushima-Sugano J."/>
            <person name="Satoh T."/>
            <person name="Shirai Y."/>
            <person name="Takahashi Y."/>
            <person name="Nakagawa K."/>
            <person name="Okumura K."/>
            <person name="Nagase T."/>
            <person name="Nomura N."/>
            <person name="Kikuchi H."/>
            <person name="Masuho Y."/>
            <person name="Yamashita R."/>
            <person name="Nakai K."/>
            <person name="Yada T."/>
            <person name="Nakamura Y."/>
            <person name="Ohara O."/>
            <person name="Isogai T."/>
            <person name="Sugano S."/>
        </authorList>
    </citation>
    <scope>NUCLEOTIDE SEQUENCE [LARGE SCALE MRNA] (ISOFORM 2)</scope>
    <source>
        <tissue>Thymus</tissue>
    </source>
</reference>
<reference key="2">
    <citation type="journal article" date="2007" name="BMC Genomics">
        <title>The full-ORF clone resource of the German cDNA consortium.</title>
        <authorList>
            <person name="Bechtel S."/>
            <person name="Rosenfelder H."/>
            <person name="Duda A."/>
            <person name="Schmidt C.P."/>
            <person name="Ernst U."/>
            <person name="Wellenreuther R."/>
            <person name="Mehrle A."/>
            <person name="Schuster C."/>
            <person name="Bahr A."/>
            <person name="Bloecker H."/>
            <person name="Heubner D."/>
            <person name="Hoerlein A."/>
            <person name="Michel G."/>
            <person name="Wedler H."/>
            <person name="Koehrer K."/>
            <person name="Ottenwaelder B."/>
            <person name="Poustka A."/>
            <person name="Wiemann S."/>
            <person name="Schupp I."/>
        </authorList>
    </citation>
    <scope>NUCLEOTIDE SEQUENCE [LARGE SCALE MRNA] (ISOFORM 1)</scope>
    <source>
        <tissue>Kidney</tissue>
    </source>
</reference>
<reference key="3">
    <citation type="journal article" date="2006" name="Nature">
        <title>DNA sequence of human chromosome 17 and analysis of rearrangement in the human lineage.</title>
        <authorList>
            <person name="Zody M.C."/>
            <person name="Garber M."/>
            <person name="Adams D.J."/>
            <person name="Sharpe T."/>
            <person name="Harrow J."/>
            <person name="Lupski J.R."/>
            <person name="Nicholson C."/>
            <person name="Searle S.M."/>
            <person name="Wilming L."/>
            <person name="Young S.K."/>
            <person name="Abouelleil A."/>
            <person name="Allen N.R."/>
            <person name="Bi W."/>
            <person name="Bloom T."/>
            <person name="Borowsky M.L."/>
            <person name="Bugalter B.E."/>
            <person name="Butler J."/>
            <person name="Chang J.L."/>
            <person name="Chen C.-K."/>
            <person name="Cook A."/>
            <person name="Corum B."/>
            <person name="Cuomo C.A."/>
            <person name="de Jong P.J."/>
            <person name="DeCaprio D."/>
            <person name="Dewar K."/>
            <person name="FitzGerald M."/>
            <person name="Gilbert J."/>
            <person name="Gibson R."/>
            <person name="Gnerre S."/>
            <person name="Goldstein S."/>
            <person name="Grafham D.V."/>
            <person name="Grocock R."/>
            <person name="Hafez N."/>
            <person name="Hagopian D.S."/>
            <person name="Hart E."/>
            <person name="Norman C.H."/>
            <person name="Humphray S."/>
            <person name="Jaffe D.B."/>
            <person name="Jones M."/>
            <person name="Kamal M."/>
            <person name="Khodiyar V.K."/>
            <person name="LaButti K."/>
            <person name="Laird G."/>
            <person name="Lehoczky J."/>
            <person name="Liu X."/>
            <person name="Lokyitsang T."/>
            <person name="Loveland J."/>
            <person name="Lui A."/>
            <person name="Macdonald P."/>
            <person name="Major J.E."/>
            <person name="Matthews L."/>
            <person name="Mauceli E."/>
            <person name="McCarroll S.A."/>
            <person name="Mihalev A.H."/>
            <person name="Mudge J."/>
            <person name="Nguyen C."/>
            <person name="Nicol R."/>
            <person name="O'Leary S.B."/>
            <person name="Osoegawa K."/>
            <person name="Schwartz D.C."/>
            <person name="Shaw-Smith C."/>
            <person name="Stankiewicz P."/>
            <person name="Steward C."/>
            <person name="Swarbreck D."/>
            <person name="Venkataraman V."/>
            <person name="Whittaker C.A."/>
            <person name="Yang X."/>
            <person name="Zimmer A.R."/>
            <person name="Bradley A."/>
            <person name="Hubbard T."/>
            <person name="Birren B.W."/>
            <person name="Rogers J."/>
            <person name="Lander E.S."/>
            <person name="Nusbaum C."/>
        </authorList>
    </citation>
    <scope>NUCLEOTIDE SEQUENCE [LARGE SCALE GENOMIC DNA]</scope>
</reference>
<reference key="4">
    <citation type="journal article" date="2004" name="Genome Res.">
        <title>The status, quality, and expansion of the NIH full-length cDNA project: the Mammalian Gene Collection (MGC).</title>
        <authorList>
            <consortium name="The MGC Project Team"/>
        </authorList>
    </citation>
    <scope>NUCLEOTIDE SEQUENCE [LARGE SCALE MRNA] (ISOFORM 1)</scope>
    <source>
        <tissue>Placenta</tissue>
        <tissue>Prostate</tissue>
    </source>
</reference>
<comment type="alternative products">
    <event type="alternative splicing"/>
    <isoform>
        <id>Q3MJ40-1</id>
        <name>1</name>
        <sequence type="displayed"/>
    </isoform>
    <isoform>
        <id>Q3MJ40-2</id>
        <name>2</name>
        <sequence type="described" ref="VSP_029792 VSP_029793"/>
    </isoform>
</comment>
<comment type="similarity">
    <text evidence="4">Belongs to the CCDC144 family.</text>
</comment>
<comment type="caution">
    <text evidence="4">Could be the product of a pseudogene.</text>
</comment>
<comment type="sequence caution" evidence="4">
    <conflict type="miscellaneous discrepancy">
        <sequence resource="EMBL-CDS" id="AAH62767"/>
    </conflict>
    <text>Contaminating sequence. Potential poly-A sequence.</text>
</comment>
<name>C144B_HUMAN</name>